<proteinExistence type="evidence at transcript level"/>
<evidence type="ECO:0000250" key="1">
    <source>
        <dbReference type="UniProtKB" id="P07911"/>
    </source>
</evidence>
<evidence type="ECO:0000250" key="2">
    <source>
        <dbReference type="UniProtKB" id="Q91X17"/>
    </source>
</evidence>
<evidence type="ECO:0000255" key="3"/>
<evidence type="ECO:0000255" key="4">
    <source>
        <dbReference type="PROSITE-ProRule" id="PRU00076"/>
    </source>
</evidence>
<evidence type="ECO:0000255" key="5">
    <source>
        <dbReference type="PROSITE-ProRule" id="PRU00375"/>
    </source>
</evidence>
<evidence type="ECO:0000269" key="6">
    <source>
    </source>
</evidence>
<evidence type="ECO:0000305" key="7"/>
<gene>
    <name type="primary">Umod</name>
</gene>
<comment type="function">
    <molecule>Uromodulin</molecule>
    <text evidence="1">Functions in biogenesis and organization of the apical membrane of epithelial cells of the thick ascending limb of Henle's loop (TALH), where it promotes formation of complex filamentous gel-like structure that may play a role in the water barrier permeability. May serve as a receptor for binding and endocytosis of cytokines (IL-1, IL-2) and TNF. Facilitates neutrophil migration across renal epithelia.</text>
</comment>
<comment type="function">
    <molecule>Uromodulin, secreted form</molecule>
    <text evidence="2">In the urine, may contribute to colloid osmotic pressure, retards passage of positively charged electrolytes, and inhibits formation of liquid containing supersaturated salts and subsequent formation of salt crystals. Protects against urinary tract infections by binding to type 1 fimbriated E.coli. Binds to bacterial adhesin fimH which mediates the stable formation of bacterial aggregates, prevents the binding of E.coli to uroplakins UPK1A and UPK1B which act as urothelial receptors for type I fimbriae, and allows for pathogen clearance through micturation. Also promotes aggregation of other bacteria including K.pneumoniae, P.aeruginosa and S.mitis and so may also protect against other uropathogens.</text>
</comment>
<comment type="subunit">
    <molecule>Uromodulin, secreted form</molecule>
    <text evidence="1">Homodimer that then polymerizes into long filaments. The filaments can additionally assemble laterally to form a sheet. The filaments consist of a zigzag-shaped backbone with laterally protruding arms which interact with bacterial adhesin fimH. Two fimH molecules can bind to a single UMOD monomer.</text>
</comment>
<comment type="subcellular location">
    <subcellularLocation>
        <location evidence="6">Apical cell membrane</location>
        <topology evidence="1">Lipid-anchor</topology>
        <topology evidence="1">GPI-anchor</topology>
    </subcellularLocation>
    <subcellularLocation>
        <location evidence="1">Basolateral cell membrane</location>
        <topology evidence="1">Lipid-anchor</topology>
        <topology evidence="1">GPI-anchor</topology>
    </subcellularLocation>
    <subcellularLocation>
        <location evidence="1">Cell projection</location>
        <location evidence="1">Cilium membrane</location>
    </subcellularLocation>
    <text evidence="1">Only a small fraction sorts to the basolateral pole of tubular epithelial cells compared to apical localization. Secreted into urine after cleavage. Colocalizes with NPHP1 and KIF3A.</text>
</comment>
<comment type="subcellular location">
    <molecule>Uromodulin, secreted form</molecule>
    <subcellularLocation>
        <location evidence="1">Secreted</location>
    </subcellularLocation>
    <text evidence="1">Detected in urine.</text>
</comment>
<comment type="tissue specificity">
    <text evidence="6">Expression restricted to the thick ascending limb of the loop of Henle (TALH).</text>
</comment>
<comment type="domain">
    <text evidence="1">The ZP domain mediates polymerization, leading to the formation of long filaments. The core of the filament consists of interlocked ZP domains which assemble into a helical structure. Each ZP domain consists of an N-terminal (ZP-N) and C-terminal (ZP-C) region connected by a flexible linker; the linker allows the ZP domain to wrap around the ZP-C subdomain of the preceding subunit. The heavily glycosylated N-terminal part of the protein (containing several EGF-like domains) forms branches which protrude from the core and are involved in pathogen capture.</text>
</comment>
<comment type="PTM">
    <text evidence="1">N-glycosylated.</text>
</comment>
<comment type="PTM">
    <text evidence="1">Proteolytically cleaved at a conserved C-terminal proteolytic cleavage site to generate the secreted form found in urine. This cleavage is catalyzed by HPN.</text>
</comment>
<protein>
    <recommendedName>
        <fullName>Uromodulin</fullName>
    </recommendedName>
    <alternativeName>
        <fullName>Tamm-Horsfall urinary glycoprotein</fullName>
        <shortName>THP</shortName>
    </alternativeName>
    <component>
        <recommendedName>
            <fullName>Uromodulin, secreted form</fullName>
        </recommendedName>
    </component>
</protein>
<dbReference type="EMBL" id="M63510">
    <property type="protein sequence ID" value="AAA42319.1"/>
    <property type="molecule type" value="mRNA"/>
</dbReference>
<dbReference type="EMBL" id="S75960">
    <property type="protein sequence ID" value="AAB33313.1"/>
    <property type="molecule type" value="mRNA"/>
</dbReference>
<dbReference type="EMBL" id="BC081814">
    <property type="protein sequence ID" value="AAH81814.1"/>
    <property type="molecule type" value="mRNA"/>
</dbReference>
<dbReference type="PIR" id="A40212">
    <property type="entry name" value="A40212"/>
</dbReference>
<dbReference type="RefSeq" id="NP_058778.1">
    <property type="nucleotide sequence ID" value="NM_017082.1"/>
</dbReference>
<dbReference type="RefSeq" id="XP_006230169.1">
    <property type="nucleotide sequence ID" value="XM_006230107.2"/>
</dbReference>
<dbReference type="SMR" id="P27590"/>
<dbReference type="FunCoup" id="P27590">
    <property type="interactions" value="8"/>
</dbReference>
<dbReference type="STRING" id="10116.ENSRNOP00000021027"/>
<dbReference type="GlyCosmos" id="P27590">
    <property type="glycosylation" value="8 sites, No reported glycans"/>
</dbReference>
<dbReference type="GlyGen" id="P27590">
    <property type="glycosylation" value="9 sites"/>
</dbReference>
<dbReference type="PhosphoSitePlus" id="P27590"/>
<dbReference type="PaxDb" id="10116-ENSRNOP00000021027"/>
<dbReference type="GeneID" id="25128"/>
<dbReference type="KEGG" id="rno:25128"/>
<dbReference type="UCSC" id="RGD:3940">
    <property type="organism name" value="rat"/>
</dbReference>
<dbReference type="AGR" id="RGD:3940"/>
<dbReference type="CTD" id="7369"/>
<dbReference type="RGD" id="3940">
    <property type="gene designation" value="Umod"/>
</dbReference>
<dbReference type="eggNOG" id="ENOG502QT6B">
    <property type="taxonomic scope" value="Eukaryota"/>
</dbReference>
<dbReference type="InParanoid" id="P27590"/>
<dbReference type="PhylomeDB" id="P27590"/>
<dbReference type="TreeFam" id="TF330284"/>
<dbReference type="Reactome" id="R-RNO-446203">
    <property type="pathway name" value="Asparagine N-linked glycosylation"/>
</dbReference>
<dbReference type="PRO" id="PR:P27590"/>
<dbReference type="Proteomes" id="UP000002494">
    <property type="component" value="Unplaced"/>
</dbReference>
<dbReference type="GO" id="GO:0045177">
    <property type="term" value="C:apical part of cell"/>
    <property type="evidence" value="ECO:0000314"/>
    <property type="project" value="RGD"/>
</dbReference>
<dbReference type="GO" id="GO:0016324">
    <property type="term" value="C:apical plasma membrane"/>
    <property type="evidence" value="ECO:0000250"/>
    <property type="project" value="UniProtKB"/>
</dbReference>
<dbReference type="GO" id="GO:0016323">
    <property type="term" value="C:basolateral plasma membrane"/>
    <property type="evidence" value="ECO:0000250"/>
    <property type="project" value="UniProtKB"/>
</dbReference>
<dbReference type="GO" id="GO:0009986">
    <property type="term" value="C:cell surface"/>
    <property type="evidence" value="ECO:0000318"/>
    <property type="project" value="GO_Central"/>
</dbReference>
<dbReference type="GO" id="GO:0060170">
    <property type="term" value="C:ciliary membrane"/>
    <property type="evidence" value="ECO:0007669"/>
    <property type="project" value="UniProtKB-SubCell"/>
</dbReference>
<dbReference type="GO" id="GO:0005929">
    <property type="term" value="C:cilium"/>
    <property type="evidence" value="ECO:0000250"/>
    <property type="project" value="UniProtKB"/>
</dbReference>
<dbReference type="GO" id="GO:0005783">
    <property type="term" value="C:endoplasmic reticulum"/>
    <property type="evidence" value="ECO:0000266"/>
    <property type="project" value="RGD"/>
</dbReference>
<dbReference type="GO" id="GO:0005615">
    <property type="term" value="C:extracellular space"/>
    <property type="evidence" value="ECO:0000314"/>
    <property type="project" value="RGD"/>
</dbReference>
<dbReference type="GO" id="GO:0016020">
    <property type="term" value="C:membrane"/>
    <property type="evidence" value="ECO:0000250"/>
    <property type="project" value="UniProtKB"/>
</dbReference>
<dbReference type="GO" id="GO:0005886">
    <property type="term" value="C:plasma membrane"/>
    <property type="evidence" value="ECO:0000266"/>
    <property type="project" value="RGD"/>
</dbReference>
<dbReference type="GO" id="GO:0098552">
    <property type="term" value="C:side of membrane"/>
    <property type="evidence" value="ECO:0007669"/>
    <property type="project" value="UniProtKB-KW"/>
</dbReference>
<dbReference type="GO" id="GO:0000922">
    <property type="term" value="C:spindle pole"/>
    <property type="evidence" value="ECO:0000250"/>
    <property type="project" value="UniProtKB"/>
</dbReference>
<dbReference type="GO" id="GO:0005509">
    <property type="term" value="F:calcium ion binding"/>
    <property type="evidence" value="ECO:0007669"/>
    <property type="project" value="InterPro"/>
</dbReference>
<dbReference type="GO" id="GO:0019864">
    <property type="term" value="F:IgG binding"/>
    <property type="evidence" value="ECO:0000266"/>
    <property type="project" value="RGD"/>
</dbReference>
<dbReference type="GO" id="GO:0140367">
    <property type="term" value="P:antibacterial innate immune response"/>
    <property type="evidence" value="ECO:0000250"/>
    <property type="project" value="UniProtKB"/>
</dbReference>
<dbReference type="GO" id="GO:0006915">
    <property type="term" value="P:apoptotic process"/>
    <property type="evidence" value="ECO:0000266"/>
    <property type="project" value="RGD"/>
</dbReference>
<dbReference type="GO" id="GO:0097190">
    <property type="term" value="P:apoptotic signaling pathway"/>
    <property type="evidence" value="ECO:0000266"/>
    <property type="project" value="RGD"/>
</dbReference>
<dbReference type="GO" id="GO:0006914">
    <property type="term" value="P:autophagy"/>
    <property type="evidence" value="ECO:0000266"/>
    <property type="project" value="RGD"/>
</dbReference>
<dbReference type="GO" id="GO:0055074">
    <property type="term" value="P:calcium ion homeostasis"/>
    <property type="evidence" value="ECO:0000266"/>
    <property type="project" value="RGD"/>
</dbReference>
<dbReference type="GO" id="GO:0033554">
    <property type="term" value="P:cellular response to stress"/>
    <property type="evidence" value="ECO:0000266"/>
    <property type="project" value="RGD"/>
</dbReference>
<dbReference type="GO" id="GO:0034620">
    <property type="term" value="P:cellular response to unfolded protein"/>
    <property type="evidence" value="ECO:0000266"/>
    <property type="project" value="RGD"/>
</dbReference>
<dbReference type="GO" id="GO:0061077">
    <property type="term" value="P:chaperone-mediated protein folding"/>
    <property type="evidence" value="ECO:0000266"/>
    <property type="project" value="RGD"/>
</dbReference>
<dbReference type="GO" id="GO:0048878">
    <property type="term" value="P:chemical homeostasis"/>
    <property type="evidence" value="ECO:0000266"/>
    <property type="project" value="RGD"/>
</dbReference>
<dbReference type="GO" id="GO:0055064">
    <property type="term" value="P:chloride ion homeostasis"/>
    <property type="evidence" value="ECO:0000266"/>
    <property type="project" value="RGD"/>
</dbReference>
<dbReference type="GO" id="GO:0046720">
    <property type="term" value="P:citric acid secretion"/>
    <property type="evidence" value="ECO:0000266"/>
    <property type="project" value="RGD"/>
</dbReference>
<dbReference type="GO" id="GO:0072044">
    <property type="term" value="P:collecting duct development"/>
    <property type="evidence" value="ECO:0000266"/>
    <property type="project" value="RGD"/>
</dbReference>
<dbReference type="GO" id="GO:0097709">
    <property type="term" value="P:connective tissue replacement"/>
    <property type="evidence" value="ECO:0000266"/>
    <property type="project" value="RGD"/>
</dbReference>
<dbReference type="GO" id="GO:0050829">
    <property type="term" value="P:defense response to Gram-negative bacterium"/>
    <property type="evidence" value="ECO:0000250"/>
    <property type="project" value="UniProtKB"/>
</dbReference>
<dbReference type="GO" id="GO:0007029">
    <property type="term" value="P:endoplasmic reticulum organization"/>
    <property type="evidence" value="ECO:0000266"/>
    <property type="project" value="RGD"/>
</dbReference>
<dbReference type="GO" id="GO:0036503">
    <property type="term" value="P:ERAD pathway"/>
    <property type="evidence" value="ECO:0000266"/>
    <property type="project" value="RGD"/>
</dbReference>
<dbReference type="GO" id="GO:0010467">
    <property type="term" value="P:gene expression"/>
    <property type="evidence" value="ECO:0000266"/>
    <property type="project" value="RGD"/>
</dbReference>
<dbReference type="GO" id="GO:0003094">
    <property type="term" value="P:glomerular filtration"/>
    <property type="evidence" value="ECO:0000266"/>
    <property type="project" value="RGD"/>
</dbReference>
<dbReference type="GO" id="GO:0007157">
    <property type="term" value="P:heterophilic cell-cell adhesion via plasma membrane cell adhesion molecules"/>
    <property type="evidence" value="ECO:0000266"/>
    <property type="project" value="RGD"/>
</dbReference>
<dbReference type="GO" id="GO:0006954">
    <property type="term" value="P:inflammatory response"/>
    <property type="evidence" value="ECO:0000266"/>
    <property type="project" value="RGD"/>
</dbReference>
<dbReference type="GO" id="GO:0006874">
    <property type="term" value="P:intracellular calcium ion homeostasis"/>
    <property type="evidence" value="ECO:0000266"/>
    <property type="project" value="RGD"/>
</dbReference>
<dbReference type="GO" id="GO:0030644">
    <property type="term" value="P:intracellular chloride ion homeostasis"/>
    <property type="evidence" value="ECO:0000266"/>
    <property type="project" value="RGD"/>
</dbReference>
<dbReference type="GO" id="GO:0030643">
    <property type="term" value="P:intracellular phosphate ion homeostasis"/>
    <property type="evidence" value="ECO:0000266"/>
    <property type="project" value="RGD"/>
</dbReference>
<dbReference type="GO" id="GO:0006883">
    <property type="term" value="P:intracellular sodium ion homeostasis"/>
    <property type="evidence" value="ECO:0000266"/>
    <property type="project" value="RGD"/>
</dbReference>
<dbReference type="GO" id="GO:0072051">
    <property type="term" value="P:juxtaglomerular apparatus development"/>
    <property type="evidence" value="ECO:0000266"/>
    <property type="project" value="RGD"/>
</dbReference>
<dbReference type="GO" id="GO:0001822">
    <property type="term" value="P:kidney development"/>
    <property type="evidence" value="ECO:0000266"/>
    <property type="project" value="RGD"/>
</dbReference>
<dbReference type="GO" id="GO:0007159">
    <property type="term" value="P:leukocyte cell-cell adhesion"/>
    <property type="evidence" value="ECO:0000266"/>
    <property type="project" value="RGD"/>
</dbReference>
<dbReference type="GO" id="GO:0006629">
    <property type="term" value="P:lipid metabolic process"/>
    <property type="evidence" value="ECO:0000266"/>
    <property type="project" value="RGD"/>
</dbReference>
<dbReference type="GO" id="GO:0072070">
    <property type="term" value="P:loop of Henle development"/>
    <property type="evidence" value="ECO:0000266"/>
    <property type="project" value="RGD"/>
</dbReference>
<dbReference type="GO" id="GO:0072218">
    <property type="term" value="P:metanephric ascending thin limb development"/>
    <property type="evidence" value="ECO:0000266"/>
    <property type="project" value="RGD"/>
</dbReference>
<dbReference type="GO" id="GO:0072221">
    <property type="term" value="P:metanephric distal convoluted tubule development"/>
    <property type="evidence" value="ECO:0000266"/>
    <property type="project" value="RGD"/>
</dbReference>
<dbReference type="GO" id="GO:0072233">
    <property type="term" value="P:metanephric thick ascending limb development"/>
    <property type="evidence" value="ECO:0000266"/>
    <property type="project" value="RGD"/>
</dbReference>
<dbReference type="GO" id="GO:0060073">
    <property type="term" value="P:micturition"/>
    <property type="evidence" value="ECO:0000266"/>
    <property type="project" value="RGD"/>
</dbReference>
<dbReference type="GO" id="GO:0050801">
    <property type="term" value="P:monoatomic ion homeostasis"/>
    <property type="evidence" value="ECO:0000266"/>
    <property type="project" value="RGD"/>
</dbReference>
<dbReference type="GO" id="GO:0033555">
    <property type="term" value="P:multicellular organismal response to stress"/>
    <property type="evidence" value="ECO:0000266"/>
    <property type="project" value="RGD"/>
</dbReference>
<dbReference type="GO" id="GO:0048871">
    <property type="term" value="P:multicellular organismal-level homeostasis"/>
    <property type="evidence" value="ECO:0000266"/>
    <property type="project" value="RGD"/>
</dbReference>
<dbReference type="GO" id="GO:0050891">
    <property type="term" value="P:multicellular organismal-level water homeostasis"/>
    <property type="evidence" value="ECO:0000266"/>
    <property type="project" value="RGD"/>
</dbReference>
<dbReference type="GO" id="GO:1990266">
    <property type="term" value="P:neutrophil migration"/>
    <property type="evidence" value="ECO:0000266"/>
    <property type="project" value="RGD"/>
</dbReference>
<dbReference type="GO" id="GO:0002251">
    <property type="term" value="P:organ or tissue specific immune response"/>
    <property type="evidence" value="ECO:0000266"/>
    <property type="project" value="RGD"/>
</dbReference>
<dbReference type="GO" id="GO:0055062">
    <property type="term" value="P:phosphate ion homeostasis"/>
    <property type="evidence" value="ECO:0000266"/>
    <property type="project" value="RGD"/>
</dbReference>
<dbReference type="GO" id="GO:0055075">
    <property type="term" value="P:potassium ion homeostasis"/>
    <property type="evidence" value="ECO:0000266"/>
    <property type="project" value="RGD"/>
</dbReference>
<dbReference type="GO" id="GO:0072665">
    <property type="term" value="P:protein localization to vacuole"/>
    <property type="evidence" value="ECO:0000266"/>
    <property type="project" value="RGD"/>
</dbReference>
<dbReference type="GO" id="GO:0044861">
    <property type="term" value="P:protein transport into plasma membrane raft"/>
    <property type="evidence" value="ECO:0000266"/>
    <property type="project" value="RGD"/>
</dbReference>
<dbReference type="GO" id="GO:0008217">
    <property type="term" value="P:regulation of blood pressure"/>
    <property type="evidence" value="ECO:0000266"/>
    <property type="project" value="RGD"/>
</dbReference>
<dbReference type="GO" id="GO:0051223">
    <property type="term" value="P:regulation of protein transport"/>
    <property type="evidence" value="ECO:0000266"/>
    <property type="project" value="RGD"/>
</dbReference>
<dbReference type="GO" id="GO:0035809">
    <property type="term" value="P:regulation of urine volume"/>
    <property type="evidence" value="ECO:0000266"/>
    <property type="project" value="RGD"/>
</dbReference>
<dbReference type="GO" id="GO:0070294">
    <property type="term" value="P:renal sodium ion absorption"/>
    <property type="evidence" value="ECO:0000266"/>
    <property type="project" value="RGD"/>
</dbReference>
<dbReference type="GO" id="GO:0097744">
    <property type="term" value="P:renal urate salt excretion"/>
    <property type="evidence" value="ECO:0000266"/>
    <property type="project" value="RGD"/>
</dbReference>
<dbReference type="GO" id="GO:0003091">
    <property type="term" value="P:renal water homeostasis"/>
    <property type="evidence" value="ECO:0000266"/>
    <property type="project" value="RGD"/>
</dbReference>
<dbReference type="GO" id="GO:0034976">
    <property type="term" value="P:response to endoplasmic reticulum stress"/>
    <property type="evidence" value="ECO:0000266"/>
    <property type="project" value="RGD"/>
</dbReference>
<dbReference type="GO" id="GO:0032496">
    <property type="term" value="P:response to lipopolysaccharide"/>
    <property type="evidence" value="ECO:0000266"/>
    <property type="project" value="RGD"/>
</dbReference>
<dbReference type="GO" id="GO:0006986">
    <property type="term" value="P:response to unfolded protein"/>
    <property type="evidence" value="ECO:0000266"/>
    <property type="project" value="RGD"/>
</dbReference>
<dbReference type="GO" id="GO:0009414">
    <property type="term" value="P:response to water deprivation"/>
    <property type="evidence" value="ECO:0000266"/>
    <property type="project" value="RGD"/>
</dbReference>
<dbReference type="GO" id="GO:0009410">
    <property type="term" value="P:response to xenobiotic stimulus"/>
    <property type="evidence" value="ECO:0000266"/>
    <property type="project" value="RGD"/>
</dbReference>
<dbReference type="GO" id="GO:0008380">
    <property type="term" value="P:RNA splicing"/>
    <property type="evidence" value="ECO:0000266"/>
    <property type="project" value="RGD"/>
</dbReference>
<dbReference type="GO" id="GO:0055078">
    <property type="term" value="P:sodium ion homeostasis"/>
    <property type="evidence" value="ECO:0000266"/>
    <property type="project" value="RGD"/>
</dbReference>
<dbReference type="GO" id="GO:0033209">
    <property type="term" value="P:tumor necrosis factor-mediated signaling pathway"/>
    <property type="evidence" value="ECO:0000266"/>
    <property type="project" value="RGD"/>
</dbReference>
<dbReference type="GO" id="GO:0015747">
    <property type="term" value="P:urate transport"/>
    <property type="evidence" value="ECO:0000266"/>
    <property type="project" value="RGD"/>
</dbReference>
<dbReference type="GO" id="GO:0071918">
    <property type="term" value="P:urea transmembrane transport"/>
    <property type="evidence" value="ECO:0000266"/>
    <property type="project" value="RGD"/>
</dbReference>
<dbReference type="CDD" id="cd00054">
    <property type="entry name" value="EGF_CA"/>
    <property type="match status" value="2"/>
</dbReference>
<dbReference type="FunFam" id="2.60.40.4100:FF:000001">
    <property type="entry name" value="alpha-tectorin isoform X1"/>
    <property type="match status" value="1"/>
</dbReference>
<dbReference type="FunFam" id="2.10.25.10:FF:000038">
    <property type="entry name" value="Fibrillin 2"/>
    <property type="match status" value="2"/>
</dbReference>
<dbReference type="FunFam" id="2.60.40.3210:FF:000003">
    <property type="entry name" value="Glycoprotein 2"/>
    <property type="match status" value="1"/>
</dbReference>
<dbReference type="FunFam" id="2.10.25.10:FF:000678">
    <property type="entry name" value="Uromodulin"/>
    <property type="match status" value="1"/>
</dbReference>
<dbReference type="Gene3D" id="2.10.25.10">
    <property type="entry name" value="Laminin"/>
    <property type="match status" value="3"/>
</dbReference>
<dbReference type="Gene3D" id="2.60.40.4100">
    <property type="entry name" value="Zona pellucida, ZP-C domain"/>
    <property type="match status" value="1"/>
</dbReference>
<dbReference type="Gene3D" id="2.60.40.3210">
    <property type="entry name" value="Zona pellucida, ZP-N domain"/>
    <property type="match status" value="1"/>
</dbReference>
<dbReference type="InterPro" id="IPR001881">
    <property type="entry name" value="EGF-like_Ca-bd_dom"/>
</dbReference>
<dbReference type="InterPro" id="IPR000742">
    <property type="entry name" value="EGF-like_dom"/>
</dbReference>
<dbReference type="InterPro" id="IPR000152">
    <property type="entry name" value="EGF-type_Asp/Asn_hydroxyl_site"/>
</dbReference>
<dbReference type="InterPro" id="IPR018097">
    <property type="entry name" value="EGF_Ca-bd_CS"/>
</dbReference>
<dbReference type="InterPro" id="IPR024731">
    <property type="entry name" value="EGF_dom"/>
</dbReference>
<dbReference type="InterPro" id="IPR009030">
    <property type="entry name" value="Growth_fac_rcpt_cys_sf"/>
</dbReference>
<dbReference type="InterPro" id="IPR049883">
    <property type="entry name" value="NOTCH1_EGF-like"/>
</dbReference>
<dbReference type="InterPro" id="IPR055355">
    <property type="entry name" value="ZP-C"/>
</dbReference>
<dbReference type="InterPro" id="IPR042235">
    <property type="entry name" value="ZP-C_dom"/>
</dbReference>
<dbReference type="InterPro" id="IPR048290">
    <property type="entry name" value="ZP_chr"/>
</dbReference>
<dbReference type="InterPro" id="IPR001507">
    <property type="entry name" value="ZP_dom"/>
</dbReference>
<dbReference type="InterPro" id="IPR017977">
    <property type="entry name" value="ZP_dom_CS"/>
</dbReference>
<dbReference type="PANTHER" id="PTHR14002">
    <property type="entry name" value="ENDOGLIN/TGF-BETA RECEPTOR TYPE III"/>
    <property type="match status" value="1"/>
</dbReference>
<dbReference type="PANTHER" id="PTHR14002:SF40">
    <property type="entry name" value="UROMODULIN"/>
    <property type="match status" value="1"/>
</dbReference>
<dbReference type="Pfam" id="PF23283">
    <property type="entry name" value="D8C_UMOD"/>
    <property type="match status" value="1"/>
</dbReference>
<dbReference type="Pfam" id="PF12947">
    <property type="entry name" value="EGF_3"/>
    <property type="match status" value="2"/>
</dbReference>
<dbReference type="Pfam" id="PF07645">
    <property type="entry name" value="EGF_CA"/>
    <property type="match status" value="1"/>
</dbReference>
<dbReference type="Pfam" id="PF00100">
    <property type="entry name" value="Zona_pellucida"/>
    <property type="match status" value="1"/>
</dbReference>
<dbReference type="PRINTS" id="PR00023">
    <property type="entry name" value="ZPELLUCIDA"/>
</dbReference>
<dbReference type="SMART" id="SM00181">
    <property type="entry name" value="EGF"/>
    <property type="match status" value="3"/>
</dbReference>
<dbReference type="SMART" id="SM00179">
    <property type="entry name" value="EGF_CA"/>
    <property type="match status" value="2"/>
</dbReference>
<dbReference type="SMART" id="SM00241">
    <property type="entry name" value="ZP"/>
    <property type="match status" value="1"/>
</dbReference>
<dbReference type="SUPFAM" id="SSF57184">
    <property type="entry name" value="Growth factor receptor domain"/>
    <property type="match status" value="1"/>
</dbReference>
<dbReference type="PROSITE" id="PS00010">
    <property type="entry name" value="ASX_HYDROXYL"/>
    <property type="match status" value="2"/>
</dbReference>
<dbReference type="PROSITE" id="PS01186">
    <property type="entry name" value="EGF_2"/>
    <property type="match status" value="4"/>
</dbReference>
<dbReference type="PROSITE" id="PS50026">
    <property type="entry name" value="EGF_3"/>
    <property type="match status" value="3"/>
</dbReference>
<dbReference type="PROSITE" id="PS01187">
    <property type="entry name" value="EGF_CA"/>
    <property type="match status" value="2"/>
</dbReference>
<dbReference type="PROSITE" id="PS00682">
    <property type="entry name" value="ZP_1"/>
    <property type="match status" value="1"/>
</dbReference>
<dbReference type="PROSITE" id="PS51034">
    <property type="entry name" value="ZP_2"/>
    <property type="match status" value="1"/>
</dbReference>
<organism>
    <name type="scientific">Rattus norvegicus</name>
    <name type="common">Rat</name>
    <dbReference type="NCBI Taxonomy" id="10116"/>
    <lineage>
        <taxon>Eukaryota</taxon>
        <taxon>Metazoa</taxon>
        <taxon>Chordata</taxon>
        <taxon>Craniata</taxon>
        <taxon>Vertebrata</taxon>
        <taxon>Euteleostomi</taxon>
        <taxon>Mammalia</taxon>
        <taxon>Eutheria</taxon>
        <taxon>Euarchontoglires</taxon>
        <taxon>Glires</taxon>
        <taxon>Rodentia</taxon>
        <taxon>Myomorpha</taxon>
        <taxon>Muroidea</taxon>
        <taxon>Muridae</taxon>
        <taxon>Murinae</taxon>
        <taxon>Rattus</taxon>
    </lineage>
</organism>
<keyword id="KW-1003">Cell membrane</keyword>
<keyword id="KW-0966">Cell projection</keyword>
<keyword id="KW-1015">Disulfide bond</keyword>
<keyword id="KW-0245">EGF-like domain</keyword>
<keyword id="KW-0325">Glycoprotein</keyword>
<keyword id="KW-0336">GPI-anchor</keyword>
<keyword id="KW-0391">Immunity</keyword>
<keyword id="KW-0399">Innate immunity</keyword>
<keyword id="KW-0449">Lipoprotein</keyword>
<keyword id="KW-0472">Membrane</keyword>
<keyword id="KW-1185">Reference proteome</keyword>
<keyword id="KW-0677">Repeat</keyword>
<keyword id="KW-0964">Secreted</keyword>
<keyword id="KW-0732">Signal</keyword>
<sequence>MGQLLSLTWLLLVMVVTPWFTVAGANDSPEARRCSECHDNATCVLDGVVTTCSCQAGFTGDGLVCEDIDECATPWTHNCSNSICMNTLGSYECSCQDGFRLTPGLGCIDVNECTEQGLSNCHSLATCVNTEGSYSCVCPKGYRGDGWYCECSPGFCEPGLDCLPQGPSGKLVCQDPCNVYETLTEYWRSTDYGAGYSCDSDMHGWYRFTGQGGVRMAETCVPVLRCNTAAPMWLNGSHPSSREGIVSRTACAHWSDHCCLWSTEIQVKACPGGFYVYNLTEPPECNLAYCTDPSSVEGTCEECGVDEDCVSDNGRWRCQCKQDFNVTDVSLLEHRLECEANEIKISLSKCQLQSLGFMKVFMYLNDRQCSGFSERGERDWMSIVTPARDGPCGTVLRRNETHATYSNTLYLASEIIIRDINIRINFECSYPLDMKVSLKTSLQPMVSALNISLGGTGKFTVQMALFQNPTYTQPYQGPSVMLSTEAFLYVGTMLDGGDLSRFVLLMTNCYATPSSNSTDPVKYFIIQDRCPHTEDTTIQVTENGESSQARFSIQMFRFAGNSDLVYLHCEVYLCDTMSEQCKPTCSGTRYRSGNFIDQTRVLNLGPITRQGVQASVSKAASSNLGFLSIWLLLFLSATLTLMVH</sequence>
<feature type="signal peptide" evidence="1">
    <location>
        <begin position="1"/>
        <end position="26"/>
    </location>
</feature>
<feature type="chain" id="PRO_0000041675" description="Uromodulin">
    <location>
        <begin position="27"/>
        <end position="615"/>
    </location>
</feature>
<feature type="chain" id="PRO_0000407912" description="Uromodulin, secreted form">
    <location>
        <begin position="27"/>
        <end position="590"/>
    </location>
</feature>
<feature type="propeptide" id="PRO_0000041676" description="Removed in mature form" evidence="3">
    <location>
        <begin position="616"/>
        <end position="644"/>
    </location>
</feature>
<feature type="domain" description="EGF-like 1" evidence="4">
    <location>
        <begin position="30"/>
        <end position="66"/>
    </location>
</feature>
<feature type="domain" description="EGF-like 2; calcium-binding" evidence="4">
    <location>
        <begin position="67"/>
        <end position="108"/>
    </location>
</feature>
<feature type="domain" description="EGF-like 3; calcium-binding" evidence="4">
    <location>
        <begin position="109"/>
        <end position="150"/>
    </location>
</feature>
<feature type="domain" description="EGF-like 4" evidence="1">
    <location>
        <begin position="295"/>
        <end position="326"/>
    </location>
</feature>
<feature type="domain" description="ZP" evidence="5">
    <location>
        <begin position="337"/>
        <end position="592"/>
    </location>
</feature>
<feature type="region of interest" description="Beta hairpin" evidence="1">
    <location>
        <begin position="151"/>
        <end position="174"/>
    </location>
</feature>
<feature type="region of interest" description="D10C" evidence="1">
    <location>
        <begin position="175"/>
        <end position="294"/>
    </location>
</feature>
<feature type="region of interest" description="ZP-N" evidence="1">
    <location>
        <begin position="337"/>
        <end position="432"/>
    </location>
</feature>
<feature type="region of interest" description="Flexible ZP-N/ZP-C linker; important for secretion and polymerization into filaments" evidence="1">
    <location>
        <begin position="433"/>
        <end position="456"/>
    </location>
</feature>
<feature type="region of interest" description="ZP-C" evidence="1">
    <location>
        <begin position="457"/>
        <end position="592"/>
    </location>
</feature>
<feature type="region of interest" description="Internal hydrophobic patch (IHP)" evidence="1">
    <location>
        <begin position="457"/>
        <end position="467"/>
    </location>
</feature>
<feature type="region of interest" description="Essential for cleavage by HPN" evidence="1">
    <location>
        <begin position="589"/>
        <end position="592"/>
    </location>
</feature>
<feature type="region of interest" description="External hydrophobic patch (EHP); regulates polymerization into filaments" evidence="1">
    <location>
        <begin position="601"/>
        <end position="609"/>
    </location>
</feature>
<feature type="site" description="Cleavage" evidence="1">
    <location>
        <begin position="590"/>
        <end position="591"/>
    </location>
</feature>
<feature type="lipid moiety-binding region" description="GPI-anchor amidated serine" evidence="3">
    <location>
        <position position="615"/>
    </location>
</feature>
<feature type="glycosylation site" description="N-linked (GlcNAc...) asparagine" evidence="3">
    <location>
        <position position="40"/>
    </location>
</feature>
<feature type="glycosylation site" description="N-linked (GlcNAc...) asparagine" evidence="3">
    <location>
        <position position="78"/>
    </location>
</feature>
<feature type="glycosylation site" description="N-linked (GlcNAc...) asparagine" evidence="3">
    <location>
        <position position="235"/>
    </location>
</feature>
<feature type="glycosylation site" description="N-linked (GlcNAc...) asparagine" evidence="3">
    <location>
        <position position="278"/>
    </location>
</feature>
<feature type="glycosylation site" description="N-linked (GlcNAc...) asparagine" evidence="3">
    <location>
        <position position="325"/>
    </location>
</feature>
<feature type="glycosylation site" description="N-linked (GlcNAc...) asparagine" evidence="3">
    <location>
        <position position="399"/>
    </location>
</feature>
<feature type="glycosylation site" description="N-linked (GlcNAc...) asparagine" evidence="3">
    <location>
        <position position="450"/>
    </location>
</feature>
<feature type="glycosylation site" description="N-linked (GlcNAc...) asparagine" evidence="3">
    <location>
        <position position="516"/>
    </location>
</feature>
<feature type="disulfide bond" evidence="4">
    <location>
        <begin position="34"/>
        <end position="43"/>
    </location>
</feature>
<feature type="disulfide bond" evidence="4">
    <location>
        <begin position="37"/>
        <end position="52"/>
    </location>
</feature>
<feature type="disulfide bond" evidence="4">
    <location>
        <begin position="54"/>
        <end position="65"/>
    </location>
</feature>
<feature type="disulfide bond" evidence="4">
    <location>
        <begin position="71"/>
        <end position="84"/>
    </location>
</feature>
<feature type="disulfide bond" evidence="4">
    <location>
        <begin position="79"/>
        <end position="93"/>
    </location>
</feature>
<feature type="disulfide bond" evidence="4">
    <location>
        <begin position="95"/>
        <end position="107"/>
    </location>
</feature>
<feature type="disulfide bond" evidence="4">
    <location>
        <begin position="113"/>
        <end position="127"/>
    </location>
</feature>
<feature type="disulfide bond" evidence="4">
    <location>
        <begin position="121"/>
        <end position="136"/>
    </location>
</feature>
<feature type="disulfide bond" evidence="4">
    <location>
        <begin position="138"/>
        <end position="149"/>
    </location>
</feature>
<feature type="disulfide bond" evidence="1">
    <location>
        <begin position="151"/>
        <end position="162"/>
    </location>
</feature>
<feature type="disulfide bond" evidence="1">
    <location>
        <begin position="156"/>
        <end position="173"/>
    </location>
</feature>
<feature type="disulfide bond" evidence="1">
    <location>
        <begin position="177"/>
        <end position="270"/>
    </location>
</feature>
<feature type="disulfide bond" evidence="1">
    <location>
        <begin position="198"/>
        <end position="285"/>
    </location>
</feature>
<feature type="disulfide bond" evidence="1">
    <location>
        <begin position="220"/>
        <end position="258"/>
    </location>
</feature>
<feature type="disulfide bond" evidence="1">
    <location>
        <begin position="226"/>
        <end position="290"/>
    </location>
</feature>
<feature type="disulfide bond" evidence="1">
    <location>
        <begin position="251"/>
        <end position="259"/>
    </location>
</feature>
<feature type="disulfide bond" evidence="1">
    <location>
        <begin position="300"/>
        <end position="309"/>
    </location>
</feature>
<feature type="disulfide bond" evidence="1">
    <location>
        <begin position="303"/>
        <end position="318"/>
    </location>
</feature>
<feature type="disulfide bond" evidence="1">
    <location>
        <begin position="320"/>
        <end position="350"/>
    </location>
</feature>
<feature type="disulfide bond" evidence="1">
    <location>
        <begin position="338"/>
        <end position="428"/>
    </location>
</feature>
<feature type="disulfide bond" evidence="1">
    <location>
        <begin position="369"/>
        <end position="392"/>
    </location>
</feature>
<feature type="disulfide bond" evidence="4">
    <location>
        <begin position="509"/>
        <end position="569"/>
    </location>
</feature>
<feature type="disulfide bond" evidence="1">
    <location>
        <begin position="530"/>
        <end position="585"/>
    </location>
</feature>
<feature type="disulfide bond" evidence="1">
    <location>
        <begin position="574"/>
        <end position="581"/>
    </location>
</feature>
<feature type="sequence conflict" description="In Ref. 3; AAH81814." evidence="7" ref="3">
    <original>F</original>
    <variation>S</variation>
    <location>
        <position position="155"/>
    </location>
</feature>
<feature type="sequence conflict" description="In Ref. 3; AAH81814." evidence="7" ref="3">
    <original>V</original>
    <variation>I</variation>
    <location>
        <position position="326"/>
    </location>
</feature>
<reference key="1">
    <citation type="journal article" date="1992" name="Proc. Natl. Acad. Sci. U.S.A.">
        <title>GP-2/THP gene family encodes self-binding glycosylphosphatidylinositol-anchored proteins in apical secretory compartments of pancreas and kidney.</title>
        <authorList>
            <person name="Fukuoka S."/>
            <person name="Freedman S.D."/>
            <person name="Yu H."/>
            <person name="Sukhatme V.P."/>
            <person name="Scheele G.A."/>
        </authorList>
    </citation>
    <scope>NUCLEOTIDE SEQUENCE [MRNA]</scope>
    <source>
        <tissue>Kidney</tissue>
    </source>
</reference>
<reference key="2">
    <citation type="journal article" date="1994" name="Gene Expr.">
        <title>Bovine and rodent Tamm-Horsfall protein (THP) genes: cloning, structural analysis, and promoter identification.</title>
        <authorList>
            <person name="Yu H."/>
            <person name="Papa F."/>
            <person name="Sukhatme V.P."/>
        </authorList>
    </citation>
    <scope>NUCLEOTIDE SEQUENCE [MRNA]</scope>
</reference>
<reference key="3">
    <citation type="journal article" date="2004" name="Genome Res.">
        <title>The status, quality, and expansion of the NIH full-length cDNA project: the Mammalian Gene Collection (MGC).</title>
        <authorList>
            <consortium name="The MGC Project Team"/>
        </authorList>
    </citation>
    <scope>NUCLEOTIDE SEQUENCE [LARGE SCALE MRNA]</scope>
    <source>
        <tissue>Kidney</tissue>
    </source>
</reference>
<reference key="4">
    <citation type="journal article" date="1979" name="Lab. Invest.">
        <title>Tamm-Horsfall glycoprotein: ultrastructural immunoperoxidase localization in rat kidney.</title>
        <authorList>
            <person name="Hoyer J.R."/>
            <person name="Sisson S.P."/>
            <person name="Vernier R.L."/>
        </authorList>
    </citation>
    <scope>TISSUE SPECIFICITY</scope>
    <scope>SUBCELLULAR LOCATION</scope>
</reference>
<accession>P27590</accession>
<accession>Q642D6</accession>
<name>UROM_RAT</name>